<gene>
    <name evidence="1" type="primary">clpX</name>
    <name type="ordered locus">MSMEG_4671</name>
    <name type="ordered locus">MSMEI_4553</name>
</gene>
<proteinExistence type="inferred from homology"/>
<name>CLPX_MYCS2</name>
<organism>
    <name type="scientific">Mycolicibacterium smegmatis (strain ATCC 700084 / mc(2)155)</name>
    <name type="common">Mycobacterium smegmatis</name>
    <dbReference type="NCBI Taxonomy" id="246196"/>
    <lineage>
        <taxon>Bacteria</taxon>
        <taxon>Bacillati</taxon>
        <taxon>Actinomycetota</taxon>
        <taxon>Actinomycetes</taxon>
        <taxon>Mycobacteriales</taxon>
        <taxon>Mycobacteriaceae</taxon>
        <taxon>Mycolicibacterium</taxon>
    </lineage>
</organism>
<accession>A0R196</accession>
<accession>I7G5S3</accession>
<dbReference type="EMBL" id="CP000480">
    <property type="protein sequence ID" value="ABK71712.1"/>
    <property type="molecule type" value="Genomic_DNA"/>
</dbReference>
<dbReference type="EMBL" id="CP001663">
    <property type="protein sequence ID" value="AFP41007.1"/>
    <property type="molecule type" value="Genomic_DNA"/>
</dbReference>
<dbReference type="RefSeq" id="WP_003896045.1">
    <property type="nucleotide sequence ID" value="NZ_SIJM01000004.1"/>
</dbReference>
<dbReference type="RefSeq" id="YP_888934.1">
    <property type="nucleotide sequence ID" value="NC_008596.1"/>
</dbReference>
<dbReference type="SMR" id="A0R196"/>
<dbReference type="STRING" id="246196.MSMEG_4671"/>
<dbReference type="PaxDb" id="246196-MSMEI_4553"/>
<dbReference type="GeneID" id="93459357"/>
<dbReference type="KEGG" id="msb:LJ00_23100"/>
<dbReference type="KEGG" id="msg:MSMEI_4553"/>
<dbReference type="KEGG" id="msm:MSMEG_4671"/>
<dbReference type="PATRIC" id="fig|246196.19.peg.4564"/>
<dbReference type="eggNOG" id="COG1219">
    <property type="taxonomic scope" value="Bacteria"/>
</dbReference>
<dbReference type="OrthoDB" id="9804062at2"/>
<dbReference type="Proteomes" id="UP000000757">
    <property type="component" value="Chromosome"/>
</dbReference>
<dbReference type="Proteomes" id="UP000006158">
    <property type="component" value="Chromosome"/>
</dbReference>
<dbReference type="GO" id="GO:0009376">
    <property type="term" value="C:HslUV protease complex"/>
    <property type="evidence" value="ECO:0007669"/>
    <property type="project" value="TreeGrafter"/>
</dbReference>
<dbReference type="GO" id="GO:0005524">
    <property type="term" value="F:ATP binding"/>
    <property type="evidence" value="ECO:0007669"/>
    <property type="project" value="UniProtKB-UniRule"/>
</dbReference>
<dbReference type="GO" id="GO:0016887">
    <property type="term" value="F:ATP hydrolysis activity"/>
    <property type="evidence" value="ECO:0007669"/>
    <property type="project" value="InterPro"/>
</dbReference>
<dbReference type="GO" id="GO:0140662">
    <property type="term" value="F:ATP-dependent protein folding chaperone"/>
    <property type="evidence" value="ECO:0007669"/>
    <property type="project" value="InterPro"/>
</dbReference>
<dbReference type="GO" id="GO:0046983">
    <property type="term" value="F:protein dimerization activity"/>
    <property type="evidence" value="ECO:0007669"/>
    <property type="project" value="InterPro"/>
</dbReference>
<dbReference type="GO" id="GO:0051082">
    <property type="term" value="F:unfolded protein binding"/>
    <property type="evidence" value="ECO:0007669"/>
    <property type="project" value="UniProtKB-UniRule"/>
</dbReference>
<dbReference type="GO" id="GO:0008270">
    <property type="term" value="F:zinc ion binding"/>
    <property type="evidence" value="ECO:0007669"/>
    <property type="project" value="InterPro"/>
</dbReference>
<dbReference type="GO" id="GO:0051301">
    <property type="term" value="P:cell division"/>
    <property type="evidence" value="ECO:0007669"/>
    <property type="project" value="TreeGrafter"/>
</dbReference>
<dbReference type="GO" id="GO:0051603">
    <property type="term" value="P:proteolysis involved in protein catabolic process"/>
    <property type="evidence" value="ECO:0007669"/>
    <property type="project" value="TreeGrafter"/>
</dbReference>
<dbReference type="CDD" id="cd19497">
    <property type="entry name" value="RecA-like_ClpX"/>
    <property type="match status" value="1"/>
</dbReference>
<dbReference type="FunFam" id="1.10.8.60:FF:000002">
    <property type="entry name" value="ATP-dependent Clp protease ATP-binding subunit ClpX"/>
    <property type="match status" value="1"/>
</dbReference>
<dbReference type="FunFam" id="3.40.50.300:FF:000005">
    <property type="entry name" value="ATP-dependent Clp protease ATP-binding subunit ClpX"/>
    <property type="match status" value="1"/>
</dbReference>
<dbReference type="Gene3D" id="1.10.8.60">
    <property type="match status" value="1"/>
</dbReference>
<dbReference type="Gene3D" id="6.20.220.10">
    <property type="entry name" value="ClpX chaperone, C4-type zinc finger domain"/>
    <property type="match status" value="1"/>
</dbReference>
<dbReference type="Gene3D" id="3.40.50.300">
    <property type="entry name" value="P-loop containing nucleotide triphosphate hydrolases"/>
    <property type="match status" value="1"/>
</dbReference>
<dbReference type="HAMAP" id="MF_00175">
    <property type="entry name" value="ClpX"/>
    <property type="match status" value="1"/>
</dbReference>
<dbReference type="InterPro" id="IPR003593">
    <property type="entry name" value="AAA+_ATPase"/>
</dbReference>
<dbReference type="InterPro" id="IPR050052">
    <property type="entry name" value="ATP-dep_Clp_protease_ClpX"/>
</dbReference>
<dbReference type="InterPro" id="IPR003959">
    <property type="entry name" value="ATPase_AAA_core"/>
</dbReference>
<dbReference type="InterPro" id="IPR019489">
    <property type="entry name" value="Clp_ATPase_C"/>
</dbReference>
<dbReference type="InterPro" id="IPR004487">
    <property type="entry name" value="Clp_protease_ATP-bd_su_ClpX"/>
</dbReference>
<dbReference type="InterPro" id="IPR046425">
    <property type="entry name" value="ClpX_bact"/>
</dbReference>
<dbReference type="InterPro" id="IPR027417">
    <property type="entry name" value="P-loop_NTPase"/>
</dbReference>
<dbReference type="InterPro" id="IPR010603">
    <property type="entry name" value="Znf_CppX_C4"/>
</dbReference>
<dbReference type="InterPro" id="IPR038366">
    <property type="entry name" value="Znf_CppX_C4_sf"/>
</dbReference>
<dbReference type="NCBIfam" id="TIGR00382">
    <property type="entry name" value="clpX"/>
    <property type="match status" value="1"/>
</dbReference>
<dbReference type="NCBIfam" id="NF003745">
    <property type="entry name" value="PRK05342.1"/>
    <property type="match status" value="1"/>
</dbReference>
<dbReference type="PANTHER" id="PTHR48102:SF7">
    <property type="entry name" value="ATP-DEPENDENT CLP PROTEASE ATP-BINDING SUBUNIT CLPX-LIKE, MITOCHONDRIAL"/>
    <property type="match status" value="1"/>
</dbReference>
<dbReference type="PANTHER" id="PTHR48102">
    <property type="entry name" value="ATP-DEPENDENT CLP PROTEASE ATP-BINDING SUBUNIT CLPX-LIKE, MITOCHONDRIAL-RELATED"/>
    <property type="match status" value="1"/>
</dbReference>
<dbReference type="Pfam" id="PF07724">
    <property type="entry name" value="AAA_2"/>
    <property type="match status" value="1"/>
</dbReference>
<dbReference type="Pfam" id="PF10431">
    <property type="entry name" value="ClpB_D2-small"/>
    <property type="match status" value="1"/>
</dbReference>
<dbReference type="Pfam" id="PF06689">
    <property type="entry name" value="zf-C4_ClpX"/>
    <property type="match status" value="1"/>
</dbReference>
<dbReference type="SMART" id="SM00382">
    <property type="entry name" value="AAA"/>
    <property type="match status" value="1"/>
</dbReference>
<dbReference type="SMART" id="SM01086">
    <property type="entry name" value="ClpB_D2-small"/>
    <property type="match status" value="1"/>
</dbReference>
<dbReference type="SMART" id="SM00994">
    <property type="entry name" value="zf-C4_ClpX"/>
    <property type="match status" value="1"/>
</dbReference>
<dbReference type="SUPFAM" id="SSF57716">
    <property type="entry name" value="Glucocorticoid receptor-like (DNA-binding domain)"/>
    <property type="match status" value="1"/>
</dbReference>
<dbReference type="SUPFAM" id="SSF52540">
    <property type="entry name" value="P-loop containing nucleoside triphosphate hydrolases"/>
    <property type="match status" value="1"/>
</dbReference>
<dbReference type="PROSITE" id="PS51902">
    <property type="entry name" value="CLPX_ZB"/>
    <property type="match status" value="1"/>
</dbReference>
<reference key="1">
    <citation type="submission" date="2006-10" db="EMBL/GenBank/DDBJ databases">
        <authorList>
            <person name="Fleischmann R.D."/>
            <person name="Dodson R.J."/>
            <person name="Haft D.H."/>
            <person name="Merkel J.S."/>
            <person name="Nelson W.C."/>
            <person name="Fraser C.M."/>
        </authorList>
    </citation>
    <scope>NUCLEOTIDE SEQUENCE [LARGE SCALE GENOMIC DNA]</scope>
    <source>
        <strain>ATCC 700084 / mc(2)155</strain>
    </source>
</reference>
<reference key="2">
    <citation type="journal article" date="2007" name="Genome Biol.">
        <title>Interrupted coding sequences in Mycobacterium smegmatis: authentic mutations or sequencing errors?</title>
        <authorList>
            <person name="Deshayes C."/>
            <person name="Perrodou E."/>
            <person name="Gallien S."/>
            <person name="Euphrasie D."/>
            <person name="Schaeffer C."/>
            <person name="Van-Dorsselaer A."/>
            <person name="Poch O."/>
            <person name="Lecompte O."/>
            <person name="Reyrat J.-M."/>
        </authorList>
    </citation>
    <scope>NUCLEOTIDE SEQUENCE [LARGE SCALE GENOMIC DNA]</scope>
    <source>
        <strain>ATCC 700084 / mc(2)155</strain>
    </source>
</reference>
<reference key="3">
    <citation type="journal article" date="2009" name="Genome Res.">
        <title>Ortho-proteogenomics: multiple proteomes investigation through orthology and a new MS-based protocol.</title>
        <authorList>
            <person name="Gallien S."/>
            <person name="Perrodou E."/>
            <person name="Carapito C."/>
            <person name="Deshayes C."/>
            <person name="Reyrat J.-M."/>
            <person name="Van Dorsselaer A."/>
            <person name="Poch O."/>
            <person name="Schaeffer C."/>
            <person name="Lecompte O."/>
        </authorList>
    </citation>
    <scope>NUCLEOTIDE SEQUENCE [LARGE SCALE GENOMIC DNA]</scope>
    <source>
        <strain>ATCC 700084 / mc(2)155</strain>
    </source>
</reference>
<keyword id="KW-0067">ATP-binding</keyword>
<keyword id="KW-0143">Chaperone</keyword>
<keyword id="KW-0479">Metal-binding</keyword>
<keyword id="KW-0547">Nucleotide-binding</keyword>
<keyword id="KW-1185">Reference proteome</keyword>
<keyword id="KW-0862">Zinc</keyword>
<comment type="function">
    <text evidence="1">ATP-dependent specificity component of the Clp protease. It directs the protease to specific substrates. Can perform chaperone functions in the absence of ClpP.</text>
</comment>
<comment type="subunit">
    <text evidence="1">Component of the ClpX-ClpP complex. Forms a hexameric ring that, in the presence of ATP, binds to fourteen ClpP subunits assembled into a disk-like structure with a central cavity, resembling the structure of eukaryotic proteasomes.</text>
</comment>
<comment type="similarity">
    <text evidence="1">Belongs to the ClpX chaperone family.</text>
</comment>
<evidence type="ECO:0000255" key="1">
    <source>
        <dbReference type="HAMAP-Rule" id="MF_00175"/>
    </source>
</evidence>
<evidence type="ECO:0000255" key="2">
    <source>
        <dbReference type="PROSITE-ProRule" id="PRU01250"/>
    </source>
</evidence>
<feature type="chain" id="PRO_1000024588" description="ATP-dependent Clp protease ATP-binding subunit ClpX">
    <location>
        <begin position="1"/>
        <end position="426"/>
    </location>
</feature>
<feature type="domain" description="ClpX-type ZB" evidence="2">
    <location>
        <begin position="1"/>
        <end position="54"/>
    </location>
</feature>
<feature type="binding site" evidence="2">
    <location>
        <position position="13"/>
    </location>
    <ligand>
        <name>Zn(2+)</name>
        <dbReference type="ChEBI" id="CHEBI:29105"/>
    </ligand>
</feature>
<feature type="binding site" evidence="2">
    <location>
        <position position="16"/>
    </location>
    <ligand>
        <name>Zn(2+)</name>
        <dbReference type="ChEBI" id="CHEBI:29105"/>
    </ligand>
</feature>
<feature type="binding site" evidence="2">
    <location>
        <position position="35"/>
    </location>
    <ligand>
        <name>Zn(2+)</name>
        <dbReference type="ChEBI" id="CHEBI:29105"/>
    </ligand>
</feature>
<feature type="binding site" evidence="2">
    <location>
        <position position="38"/>
    </location>
    <ligand>
        <name>Zn(2+)</name>
        <dbReference type="ChEBI" id="CHEBI:29105"/>
    </ligand>
</feature>
<feature type="binding site" evidence="1">
    <location>
        <begin position="122"/>
        <end position="129"/>
    </location>
    <ligand>
        <name>ATP</name>
        <dbReference type="ChEBI" id="CHEBI:30616"/>
    </ligand>
</feature>
<protein>
    <recommendedName>
        <fullName evidence="1">ATP-dependent Clp protease ATP-binding subunit ClpX</fullName>
    </recommendedName>
</protein>
<sequence length="426" mass="46676">MARIGDGGDLLKCSFCGKSQKQVKKLIAGPGVYICDECIDLCNEIIEEELADADDVKLDELPKPAEIREFLEGYVIGQDSAKRTLAVAVYNHYKRIQAGEKSRDSRSEPVELTKSNILMLGPTGCGKTYLAQTLAKMLNVPFAIADATALTEAGYVGEDVENILLKLIQAADYDVKRAETGIIYIDEVDKIARKSENPSITRDVSGEGVQQALLKILEGTQASVPPQGGRKHPHQEFIQIDTTNVLFIVAGAFAGLEKIVSDRVGKRGLGFGAEVRSKAEIDTQDHFAEVMPEDLIKFGLIPEFIGRLPVVASVTNLDKASLVKILSEPKNALVKQYVRLFEMDGVELEFTEEALEAIADQAIHRGTGARGLRAIMEEVLLPVMYDIPSRDDVAKVVVTKETVQDNVLPTIVPRKPSRSERRDKSA</sequence>